<proteinExistence type="inferred from homology"/>
<name>WHIA_STAA8</name>
<reference key="1">
    <citation type="book" date="2006" name="Gram positive pathogens, 2nd edition">
        <title>The Staphylococcus aureus NCTC 8325 genome.</title>
        <editorList>
            <person name="Fischetti V."/>
            <person name="Novick R."/>
            <person name="Ferretti J."/>
            <person name="Portnoy D."/>
            <person name="Rood J."/>
        </editorList>
        <authorList>
            <person name="Gillaspy A.F."/>
            <person name="Worrell V."/>
            <person name="Orvis J."/>
            <person name="Roe B.A."/>
            <person name="Dyer D.W."/>
            <person name="Iandolo J.J."/>
        </authorList>
    </citation>
    <scope>NUCLEOTIDE SEQUENCE [LARGE SCALE GENOMIC DNA]</scope>
    <source>
        <strain>NCTC 8325 / PS 47</strain>
    </source>
</reference>
<dbReference type="EMBL" id="CP000253">
    <property type="protein sequence ID" value="ABD29918.1"/>
    <property type="molecule type" value="Genomic_DNA"/>
</dbReference>
<dbReference type="RefSeq" id="WP_000006551.1">
    <property type="nucleotide sequence ID" value="NZ_LS483365.1"/>
</dbReference>
<dbReference type="RefSeq" id="YP_499346.1">
    <property type="nucleotide sequence ID" value="NC_007795.1"/>
</dbReference>
<dbReference type="SMR" id="Q2G037"/>
<dbReference type="STRING" id="93061.SAOUHSC_00789"/>
<dbReference type="PaxDb" id="1280-SAXN108_0835"/>
<dbReference type="GeneID" id="3919353"/>
<dbReference type="KEGG" id="sao:SAOUHSC_00789"/>
<dbReference type="PATRIC" id="fig|93061.5.peg.712"/>
<dbReference type="eggNOG" id="COG1481">
    <property type="taxonomic scope" value="Bacteria"/>
</dbReference>
<dbReference type="HOGENOM" id="CLU_053282_0_0_9"/>
<dbReference type="OrthoDB" id="401278at2"/>
<dbReference type="PRO" id="PR:Q2G037"/>
<dbReference type="Proteomes" id="UP000008816">
    <property type="component" value="Chromosome"/>
</dbReference>
<dbReference type="GO" id="GO:0003677">
    <property type="term" value="F:DNA binding"/>
    <property type="evidence" value="ECO:0007669"/>
    <property type="project" value="UniProtKB-UniRule"/>
</dbReference>
<dbReference type="GO" id="GO:0051301">
    <property type="term" value="P:cell division"/>
    <property type="evidence" value="ECO:0007669"/>
    <property type="project" value="UniProtKB-UniRule"/>
</dbReference>
<dbReference type="GO" id="GO:0043937">
    <property type="term" value="P:regulation of sporulation"/>
    <property type="evidence" value="ECO:0000318"/>
    <property type="project" value="GO_Central"/>
</dbReference>
<dbReference type="FunFam" id="3.10.28.10:FF:000002">
    <property type="entry name" value="Probable cell division protein WhiA"/>
    <property type="match status" value="1"/>
</dbReference>
<dbReference type="Gene3D" id="3.10.28.10">
    <property type="entry name" value="Homing endonucleases"/>
    <property type="match status" value="1"/>
</dbReference>
<dbReference type="HAMAP" id="MF_01420">
    <property type="entry name" value="HTH_type_WhiA"/>
    <property type="match status" value="1"/>
</dbReference>
<dbReference type="InterPro" id="IPR027434">
    <property type="entry name" value="Homing_endonucl"/>
</dbReference>
<dbReference type="InterPro" id="IPR018478">
    <property type="entry name" value="Sporu_reg_WhiA_N_dom"/>
</dbReference>
<dbReference type="InterPro" id="IPR003802">
    <property type="entry name" value="Sporulation_regulator_WhiA"/>
</dbReference>
<dbReference type="InterPro" id="IPR023054">
    <property type="entry name" value="Sporulation_regulator_WhiA_C"/>
</dbReference>
<dbReference type="InterPro" id="IPR039518">
    <property type="entry name" value="WhiA_LAGLIDADG_dom"/>
</dbReference>
<dbReference type="NCBIfam" id="TIGR00647">
    <property type="entry name" value="DNA_bind_WhiA"/>
    <property type="match status" value="1"/>
</dbReference>
<dbReference type="PANTHER" id="PTHR37307">
    <property type="entry name" value="CELL DIVISION PROTEIN WHIA-RELATED"/>
    <property type="match status" value="1"/>
</dbReference>
<dbReference type="PANTHER" id="PTHR37307:SF1">
    <property type="entry name" value="CELL DIVISION PROTEIN WHIA-RELATED"/>
    <property type="match status" value="1"/>
</dbReference>
<dbReference type="Pfam" id="PF02650">
    <property type="entry name" value="HTH_WhiA"/>
    <property type="match status" value="1"/>
</dbReference>
<dbReference type="Pfam" id="PF14527">
    <property type="entry name" value="LAGLIDADG_WhiA"/>
    <property type="match status" value="1"/>
</dbReference>
<dbReference type="Pfam" id="PF10298">
    <property type="entry name" value="WhiA_N"/>
    <property type="match status" value="1"/>
</dbReference>
<dbReference type="SUPFAM" id="SSF55608">
    <property type="entry name" value="Homing endonucleases"/>
    <property type="match status" value="1"/>
</dbReference>
<keyword id="KW-0131">Cell cycle</keyword>
<keyword id="KW-0132">Cell division</keyword>
<keyword id="KW-0238">DNA-binding</keyword>
<keyword id="KW-1185">Reference proteome</keyword>
<protein>
    <recommendedName>
        <fullName evidence="1">Probable cell division protein WhiA</fullName>
    </recommendedName>
</protein>
<evidence type="ECO:0000255" key="1">
    <source>
        <dbReference type="HAMAP-Rule" id="MF_01420"/>
    </source>
</evidence>
<feature type="chain" id="PRO_0000376561" description="Probable cell division protein WhiA">
    <location>
        <begin position="1"/>
        <end position="314"/>
    </location>
</feature>
<feature type="DNA-binding region" description="H-T-H motif" evidence="1">
    <location>
        <begin position="274"/>
        <end position="308"/>
    </location>
</feature>
<comment type="function">
    <text evidence="1">Involved in cell division and chromosome segregation.</text>
</comment>
<comment type="similarity">
    <text evidence="1">Belongs to the WhiA family.</text>
</comment>
<sequence>MSFASEMKNELTRIDVDEMNAKAELSALIRMNGALSLSNQQFVINVQTENATTARRIYSLIKRVFNVEVEILVRKKMKLKKNNIYICRTKMKAKEILDELGILKDGIFTHEIDHSMIQDDEMRRSYLRGAFLAGGSVNNPETSSYHLEIFSQNESHAEGLTKLMNSYELNAKHLERKKGSITYLKEAEKISDFLSLIGGYQALLKFEDVRIVRDMRNSVNRLVNCETANLNKTVSAAMKQVESIKLIDKEIGIENLPDRLREIARIRVEHQEISLKELGEMVSTGPISKSGVNHRLRKLNDLADKIRNGEQIEL</sequence>
<gene>
    <name evidence="1" type="primary">whiA</name>
    <name type="ordered locus">SAOUHSC_00789</name>
</gene>
<accession>Q2G037</accession>
<organism>
    <name type="scientific">Staphylococcus aureus (strain NCTC 8325 / PS 47)</name>
    <dbReference type="NCBI Taxonomy" id="93061"/>
    <lineage>
        <taxon>Bacteria</taxon>
        <taxon>Bacillati</taxon>
        <taxon>Bacillota</taxon>
        <taxon>Bacilli</taxon>
        <taxon>Bacillales</taxon>
        <taxon>Staphylococcaceae</taxon>
        <taxon>Staphylococcus</taxon>
    </lineage>
</organism>